<sequence>MDTYGSIKRDLKYMYDVEEVFRNTIPKTYFGIDDVEDLHVDEAGISNIHNNITLGTKKCYHLYKKGHRTQVPIYLGSLVTRESNEYEDVSYSYDNLNTIYKDAPVWEPLLNKVSKWYDEGWSVPSSKPIPYDPNYSKCLILSPDKYKKYHKVVVDVDYDAFHWSIDVNSEFMDMPNVIRAWDISTIPQFVDGFPMLKHLIDRSKKEALFYFNYRLIPYVVHNIDKDDDMWREWLSYFLHGDHFKPDRGSYDNFGSLLGHKRLEVALMYHNRIRLMPMSATALDAMNEGAKFLMKDPTYHTAVMKKYNGVLTQYGMAEPLGYNRGWGYTGVTTADSPFILSNVNGADGYTVIDREAVEEAKEIGMQYTPKLVKLQLANMTKTSSPVNLIDSLIGNAIISLTGFAGSEKVSTALDQFEKENFERKVPDELFTAISNVTYEMVRESFQPLERSMLDKRTRLLRLYNAGTSASSSAPPGARYIFNKKMIMYSTFLSKSIDVTDEYAPMSFITSLNFNNKTANILTHPQNYYMYDWHDNHNRIINSGSREVRGGRATRIITPDPPSNYMLLILGALNTVRDMGSHRTGFSNLGMNEVVGSSFLDAVSHDALAPQCLATSSSRSLCAQALDYSTWDRQQGGRIAEAKAHGIMRVANELFPNTNTNLSDVHNLLELPMSSILYLWSESIKSSYKYKIDHSTVAVDAVRSGELTTQFSNHVTNLAALRQYHETYNRTKVPQGFRPIEVAQINIVGDDVNVILRTADRKPFTLRDMEGYHNHTFEKAAEYEFSISKKRSMMSNVATEHIKQYFKMGDILLDVMLSSMTSERNTFREQGYMNGINLLYDIAVTIMARYAQNDKLFEDMMANLPFMEGVVYRHGSQKYHFHPSPCHLLGSGSPEILPSAIDLRTFARVITVLGDYESDLYEAMSSLNATLLSTSGTTQFESQVRKHLSEELGDNIISPVWSEVFYRDEVGYEMVTKHNKLTPEGHREYLVDRIISTLSNREKLIMNNADIIEKLLSGKLKKVKRYFQEIKFKMSNMPITGLPDRKIEGVSELSSPYRAADVGMRRVHKCIGLSRRNLKFPSVTERLSRLLKSYGLVTQADSAKILSAAAGLGRSSTRYRNLGTDLGLSDMHASSFAQRLPALLTQYEIENASGSFTFYDTVSRTYDVSEASMNERVGDVSNNPIARANSSTSTYYRFRGMLHCLYGARFGLSLHASVE</sequence>
<reference key="1">
    <citation type="submission" date="2004-02" db="EMBL/GenBank/DDBJ databases">
        <title>Sequence of segment 1 of crustacean reovirus 905 isolated from Chinese mitten-handed crab (Eriocheir sinensis).</title>
        <authorList>
            <person name="Zhang S."/>
        </authorList>
    </citation>
    <scope>NUCLEOTIDE SEQUENCE [GENOMIC RNA]</scope>
</reference>
<protein>
    <recommendedName>
        <fullName>RNA-directed RNA polymerase</fullName>
        <ecNumber>2.7.7.48</ecNumber>
    </recommendedName>
</protein>
<name>RDRP_ESRV9</name>
<accession>Q698V5</accession>
<comment type="function">
    <text evidence="1">RNA-directed RNA polymerase that is involved in transcription and genome replication. Following infection, it catalyzes the synthesis of fully conservative plus strands. After core assembly, which consists in recruitment of one capped plus-strand for each genomic segments and polymerase complexes, the polymerase switches mode and catalyzes the synthesis of complementary minus-strands (By similarity).</text>
</comment>
<comment type="catalytic activity">
    <reaction>
        <text>RNA(n) + a ribonucleoside 5'-triphosphate = RNA(n+1) + diphosphate</text>
        <dbReference type="Rhea" id="RHEA:21248"/>
        <dbReference type="Rhea" id="RHEA-COMP:14527"/>
        <dbReference type="Rhea" id="RHEA-COMP:17342"/>
        <dbReference type="ChEBI" id="CHEBI:33019"/>
        <dbReference type="ChEBI" id="CHEBI:61557"/>
        <dbReference type="ChEBI" id="CHEBI:140395"/>
        <dbReference type="EC" id="2.7.7.48"/>
    </reaction>
</comment>
<comment type="subcellular location">
    <subcellularLocation>
        <location evidence="2">Virion</location>
    </subcellularLocation>
</comment>
<comment type="similarity">
    <text evidence="2">Belongs to the reoviridae RNA-directed RNA polymerase family.</text>
</comment>
<proteinExistence type="inferred from homology"/>
<organismHost>
    <name type="scientific">Eriocheir sinensis</name>
    <name type="common">Chinese mitten crab</name>
    <dbReference type="NCBI Taxonomy" id="95602"/>
</organismHost>
<organism>
    <name type="scientific">Eriocheir sinensis reovirus (isolate China/905)</name>
    <name type="common">EsRV</name>
    <dbReference type="NCBI Taxonomy" id="648171"/>
    <lineage>
        <taxon>Viruses</taxon>
        <taxon>Riboviria</taxon>
        <taxon>Orthornavirae</taxon>
        <taxon>Duplornaviricota</taxon>
        <taxon>Resentoviricetes</taxon>
        <taxon>Reovirales</taxon>
        <taxon>Sedoreoviridae</taxon>
        <taxon>Cardoreovirus</taxon>
        <taxon>Eriocheir sinensis reovirus</taxon>
    </lineage>
</organism>
<keyword id="KW-0378">Hydrolase</keyword>
<keyword id="KW-0547">Nucleotide-binding</keyword>
<keyword id="KW-0548">Nucleotidyltransferase</keyword>
<keyword id="KW-0696">RNA-directed RNA polymerase</keyword>
<keyword id="KW-0808">Transferase</keyword>
<keyword id="KW-0693">Viral RNA replication</keyword>
<keyword id="KW-0946">Virion</keyword>
<feature type="chain" id="PRO_0000404333" description="RNA-directed RNA polymerase">
    <location>
        <begin position="1"/>
        <end position="1217"/>
    </location>
</feature>
<evidence type="ECO:0000250" key="1"/>
<evidence type="ECO:0000305" key="2"/>
<dbReference type="EC" id="2.7.7.48"/>
<dbReference type="EMBL" id="AY542965">
    <property type="protein sequence ID" value="AAT11887.1"/>
    <property type="molecule type" value="Genomic_RNA"/>
</dbReference>
<dbReference type="SMR" id="Q698V5"/>
<dbReference type="GO" id="GO:0044423">
    <property type="term" value="C:virion component"/>
    <property type="evidence" value="ECO:0007669"/>
    <property type="project" value="UniProtKB-KW"/>
</dbReference>
<dbReference type="GO" id="GO:0016787">
    <property type="term" value="F:hydrolase activity"/>
    <property type="evidence" value="ECO:0007669"/>
    <property type="project" value="UniProtKB-KW"/>
</dbReference>
<dbReference type="GO" id="GO:0000166">
    <property type="term" value="F:nucleotide binding"/>
    <property type="evidence" value="ECO:0007669"/>
    <property type="project" value="UniProtKB-KW"/>
</dbReference>
<dbReference type="GO" id="GO:0003968">
    <property type="term" value="F:RNA-directed RNA polymerase activity"/>
    <property type="evidence" value="ECO:0007669"/>
    <property type="project" value="UniProtKB-KW"/>
</dbReference>
<dbReference type="InterPro" id="IPR043502">
    <property type="entry name" value="DNA/RNA_pol_sf"/>
</dbReference>
<dbReference type="InterPro" id="IPR026381">
    <property type="entry name" value="Seadorna_RNAP"/>
</dbReference>
<dbReference type="NCBIfam" id="TIGR04234">
    <property type="entry name" value="seadorna_RNAP"/>
    <property type="match status" value="1"/>
</dbReference>
<dbReference type="SUPFAM" id="SSF56672">
    <property type="entry name" value="DNA/RNA polymerases"/>
    <property type="match status" value="1"/>
</dbReference>